<reference key="1">
    <citation type="journal article" date="2004" name="Nucleic Acids Res.">
        <title>Thermoadaptation trait revealed by the genome sequence of thermophilic Geobacillus kaustophilus.</title>
        <authorList>
            <person name="Takami H."/>
            <person name="Takaki Y."/>
            <person name="Chee G.-J."/>
            <person name="Nishi S."/>
            <person name="Shimamura S."/>
            <person name="Suzuki H."/>
            <person name="Matsui S."/>
            <person name="Uchiyama I."/>
        </authorList>
    </citation>
    <scope>NUCLEOTIDE SEQUENCE [LARGE SCALE GENOMIC DNA]</scope>
    <source>
        <strain>HTA426</strain>
    </source>
</reference>
<comment type="function">
    <text evidence="1">Catalyzes the NADPH-dependent reduction of L-glutamate 5-phosphate into L-glutamate 5-semialdehyde and phosphate. The product spontaneously undergoes cyclization to form 1-pyrroline-5-carboxylate.</text>
</comment>
<comment type="catalytic activity">
    <reaction evidence="1">
        <text>L-glutamate 5-semialdehyde + phosphate + NADP(+) = L-glutamyl 5-phosphate + NADPH + H(+)</text>
        <dbReference type="Rhea" id="RHEA:19541"/>
        <dbReference type="ChEBI" id="CHEBI:15378"/>
        <dbReference type="ChEBI" id="CHEBI:43474"/>
        <dbReference type="ChEBI" id="CHEBI:57783"/>
        <dbReference type="ChEBI" id="CHEBI:58066"/>
        <dbReference type="ChEBI" id="CHEBI:58274"/>
        <dbReference type="ChEBI" id="CHEBI:58349"/>
        <dbReference type="EC" id="1.2.1.41"/>
    </reaction>
</comment>
<comment type="pathway">
    <text evidence="1">Amino-acid biosynthesis; L-proline biosynthesis; L-glutamate 5-semialdehyde from L-glutamate: step 2/2.</text>
</comment>
<comment type="subcellular location">
    <subcellularLocation>
        <location evidence="1">Cytoplasm</location>
    </subcellularLocation>
</comment>
<comment type="similarity">
    <text evidence="1">Belongs to the gamma-glutamyl phosphate reductase family.</text>
</comment>
<evidence type="ECO:0000255" key="1">
    <source>
        <dbReference type="HAMAP-Rule" id="MF_00412"/>
    </source>
</evidence>
<gene>
    <name evidence="1" type="primary">proA</name>
    <name type="ordered locus">GK2049</name>
</gene>
<protein>
    <recommendedName>
        <fullName evidence="1">Gamma-glutamyl phosphate reductase</fullName>
        <shortName evidence="1">GPR</shortName>
        <ecNumber evidence="1">1.2.1.41</ecNumber>
    </recommendedName>
    <alternativeName>
        <fullName evidence="1">Glutamate-5-semialdehyde dehydrogenase</fullName>
    </alternativeName>
    <alternativeName>
        <fullName evidence="1">Glutamyl-gamma-semialdehyde dehydrogenase</fullName>
        <shortName evidence="1">GSA dehydrogenase</shortName>
    </alternativeName>
</protein>
<feature type="chain" id="PRO_0000189728" description="Gamma-glutamyl phosphate reductase">
    <location>
        <begin position="1"/>
        <end position="414"/>
    </location>
</feature>
<accession>Q5KYA2</accession>
<keyword id="KW-0028">Amino-acid biosynthesis</keyword>
<keyword id="KW-0963">Cytoplasm</keyword>
<keyword id="KW-0521">NADP</keyword>
<keyword id="KW-0560">Oxidoreductase</keyword>
<keyword id="KW-0641">Proline biosynthesis</keyword>
<keyword id="KW-1185">Reference proteome</keyword>
<dbReference type="EC" id="1.2.1.41" evidence="1"/>
<dbReference type="EMBL" id="BA000043">
    <property type="protein sequence ID" value="BAD76334.1"/>
    <property type="molecule type" value="Genomic_DNA"/>
</dbReference>
<dbReference type="RefSeq" id="WP_011231535.1">
    <property type="nucleotide sequence ID" value="NC_006510.1"/>
</dbReference>
<dbReference type="SMR" id="Q5KYA2"/>
<dbReference type="STRING" id="235909.GK2049"/>
<dbReference type="KEGG" id="gka:GK2049"/>
<dbReference type="eggNOG" id="COG0014">
    <property type="taxonomic scope" value="Bacteria"/>
</dbReference>
<dbReference type="HOGENOM" id="CLU_030231_0_0_9"/>
<dbReference type="UniPathway" id="UPA00098">
    <property type="reaction ID" value="UER00360"/>
</dbReference>
<dbReference type="Proteomes" id="UP000001172">
    <property type="component" value="Chromosome"/>
</dbReference>
<dbReference type="GO" id="GO:0005737">
    <property type="term" value="C:cytoplasm"/>
    <property type="evidence" value="ECO:0007669"/>
    <property type="project" value="UniProtKB-SubCell"/>
</dbReference>
<dbReference type="GO" id="GO:0004350">
    <property type="term" value="F:glutamate-5-semialdehyde dehydrogenase activity"/>
    <property type="evidence" value="ECO:0007669"/>
    <property type="project" value="UniProtKB-UniRule"/>
</dbReference>
<dbReference type="GO" id="GO:0050661">
    <property type="term" value="F:NADP binding"/>
    <property type="evidence" value="ECO:0007669"/>
    <property type="project" value="InterPro"/>
</dbReference>
<dbReference type="GO" id="GO:0055129">
    <property type="term" value="P:L-proline biosynthetic process"/>
    <property type="evidence" value="ECO:0007669"/>
    <property type="project" value="UniProtKB-UniRule"/>
</dbReference>
<dbReference type="CDD" id="cd07079">
    <property type="entry name" value="ALDH_F18-19_ProA-GPR"/>
    <property type="match status" value="1"/>
</dbReference>
<dbReference type="FunFam" id="3.40.309.10:FF:000006">
    <property type="entry name" value="Gamma-glutamyl phosphate reductase"/>
    <property type="match status" value="1"/>
</dbReference>
<dbReference type="Gene3D" id="3.40.605.10">
    <property type="entry name" value="Aldehyde Dehydrogenase, Chain A, domain 1"/>
    <property type="match status" value="1"/>
</dbReference>
<dbReference type="Gene3D" id="3.40.309.10">
    <property type="entry name" value="Aldehyde Dehydrogenase, Chain A, domain 2"/>
    <property type="match status" value="1"/>
</dbReference>
<dbReference type="HAMAP" id="MF_00412">
    <property type="entry name" value="ProA"/>
    <property type="match status" value="1"/>
</dbReference>
<dbReference type="InterPro" id="IPR016161">
    <property type="entry name" value="Ald_DH/histidinol_DH"/>
</dbReference>
<dbReference type="InterPro" id="IPR016163">
    <property type="entry name" value="Ald_DH_C"/>
</dbReference>
<dbReference type="InterPro" id="IPR016162">
    <property type="entry name" value="Ald_DH_N"/>
</dbReference>
<dbReference type="InterPro" id="IPR015590">
    <property type="entry name" value="Aldehyde_DH_dom"/>
</dbReference>
<dbReference type="InterPro" id="IPR020593">
    <property type="entry name" value="G-glutamylP_reductase_CS"/>
</dbReference>
<dbReference type="InterPro" id="IPR012134">
    <property type="entry name" value="Glu-5-SA_DH"/>
</dbReference>
<dbReference type="InterPro" id="IPR000965">
    <property type="entry name" value="GPR_dom"/>
</dbReference>
<dbReference type="NCBIfam" id="NF001221">
    <property type="entry name" value="PRK00197.1"/>
    <property type="match status" value="1"/>
</dbReference>
<dbReference type="NCBIfam" id="TIGR00407">
    <property type="entry name" value="proA"/>
    <property type="match status" value="1"/>
</dbReference>
<dbReference type="PANTHER" id="PTHR11063:SF8">
    <property type="entry name" value="DELTA-1-PYRROLINE-5-CARBOXYLATE SYNTHASE"/>
    <property type="match status" value="1"/>
</dbReference>
<dbReference type="PANTHER" id="PTHR11063">
    <property type="entry name" value="GLUTAMATE SEMIALDEHYDE DEHYDROGENASE"/>
    <property type="match status" value="1"/>
</dbReference>
<dbReference type="Pfam" id="PF00171">
    <property type="entry name" value="Aldedh"/>
    <property type="match status" value="1"/>
</dbReference>
<dbReference type="PIRSF" id="PIRSF000151">
    <property type="entry name" value="GPR"/>
    <property type="match status" value="1"/>
</dbReference>
<dbReference type="SUPFAM" id="SSF53720">
    <property type="entry name" value="ALDH-like"/>
    <property type="match status" value="1"/>
</dbReference>
<dbReference type="PROSITE" id="PS01223">
    <property type="entry name" value="PROA"/>
    <property type="match status" value="1"/>
</dbReference>
<sequence>MSELLEKAERLKTASQTLAMLSAEEKNEALEQIAQTLDRERAFILQENEKDMAQGREQGLSPALLDRLQLTNERLDQIIDGVRQVASLPDPVGEIIAEWTRPNGLRIQTVRVPLGVIGMVYEARPNVTVDAASLCLKTGNAVLLRGSTSALHSNKALVAVMKEALRTTAIPETAIELLEDTSRETAQRMFRLNNYLDVLIPRGGAGLIRSVVENATVPVLETGVGNCHIFVDESAERQMAIEIVLNAKLQRPSVCNAVETVLIHERWPYAADLLETLHARGVELRGDQRLASAYPFISEATEDDWYTEYLAPILAVKLVADVDEAIGHIRRYGTKHSEAIITENEVNVRRFFQAVDAAVLYHNASTRFTDGEQFGYGAEIGISTQKLHARGPMGLVAITTTKSLVYGTGQIRTV</sequence>
<name>PROA_GEOKA</name>
<proteinExistence type="inferred from homology"/>
<organism>
    <name type="scientific">Geobacillus kaustophilus (strain HTA426)</name>
    <dbReference type="NCBI Taxonomy" id="235909"/>
    <lineage>
        <taxon>Bacteria</taxon>
        <taxon>Bacillati</taxon>
        <taxon>Bacillota</taxon>
        <taxon>Bacilli</taxon>
        <taxon>Bacillales</taxon>
        <taxon>Anoxybacillaceae</taxon>
        <taxon>Geobacillus</taxon>
        <taxon>Geobacillus thermoleovorans group</taxon>
    </lineage>
</organism>